<name>RS15_PAEAT</name>
<feature type="chain" id="PRO_1000054746" description="Small ribosomal subunit protein uS15">
    <location>
        <begin position="1"/>
        <end position="89"/>
    </location>
</feature>
<keyword id="KW-0687">Ribonucleoprotein</keyword>
<keyword id="KW-0689">Ribosomal protein</keyword>
<keyword id="KW-0694">RNA-binding</keyword>
<keyword id="KW-0699">rRNA-binding</keyword>
<evidence type="ECO:0000255" key="1">
    <source>
        <dbReference type="HAMAP-Rule" id="MF_01343"/>
    </source>
</evidence>
<evidence type="ECO:0000305" key="2"/>
<dbReference type="EMBL" id="CP000474">
    <property type="protein sequence ID" value="ABM07153.1"/>
    <property type="molecule type" value="Genomic_DNA"/>
</dbReference>
<dbReference type="RefSeq" id="WP_011774281.1">
    <property type="nucleotide sequence ID" value="NC_008711.1"/>
</dbReference>
<dbReference type="SMR" id="A1R524"/>
<dbReference type="STRING" id="290340.AAur_1569"/>
<dbReference type="KEGG" id="aau:AAur_1569"/>
<dbReference type="eggNOG" id="COG0184">
    <property type="taxonomic scope" value="Bacteria"/>
</dbReference>
<dbReference type="HOGENOM" id="CLU_148518_0_0_11"/>
<dbReference type="OrthoDB" id="9799262at2"/>
<dbReference type="Proteomes" id="UP000000637">
    <property type="component" value="Chromosome"/>
</dbReference>
<dbReference type="GO" id="GO:0022627">
    <property type="term" value="C:cytosolic small ribosomal subunit"/>
    <property type="evidence" value="ECO:0007669"/>
    <property type="project" value="TreeGrafter"/>
</dbReference>
<dbReference type="GO" id="GO:0019843">
    <property type="term" value="F:rRNA binding"/>
    <property type="evidence" value="ECO:0007669"/>
    <property type="project" value="UniProtKB-UniRule"/>
</dbReference>
<dbReference type="GO" id="GO:0003735">
    <property type="term" value="F:structural constituent of ribosome"/>
    <property type="evidence" value="ECO:0007669"/>
    <property type="project" value="InterPro"/>
</dbReference>
<dbReference type="GO" id="GO:0006412">
    <property type="term" value="P:translation"/>
    <property type="evidence" value="ECO:0007669"/>
    <property type="project" value="UniProtKB-UniRule"/>
</dbReference>
<dbReference type="CDD" id="cd00353">
    <property type="entry name" value="Ribosomal_S15p_S13e"/>
    <property type="match status" value="1"/>
</dbReference>
<dbReference type="FunFam" id="1.10.287.10:FF:000002">
    <property type="entry name" value="30S ribosomal protein S15"/>
    <property type="match status" value="1"/>
</dbReference>
<dbReference type="Gene3D" id="6.10.250.3130">
    <property type="match status" value="1"/>
</dbReference>
<dbReference type="Gene3D" id="1.10.287.10">
    <property type="entry name" value="S15/NS1, RNA-binding"/>
    <property type="match status" value="1"/>
</dbReference>
<dbReference type="HAMAP" id="MF_01343_B">
    <property type="entry name" value="Ribosomal_uS15_B"/>
    <property type="match status" value="1"/>
</dbReference>
<dbReference type="InterPro" id="IPR000589">
    <property type="entry name" value="Ribosomal_uS15"/>
</dbReference>
<dbReference type="InterPro" id="IPR005290">
    <property type="entry name" value="Ribosomal_uS15_bac-type"/>
</dbReference>
<dbReference type="InterPro" id="IPR009068">
    <property type="entry name" value="uS15_NS1_RNA-bd_sf"/>
</dbReference>
<dbReference type="NCBIfam" id="TIGR00952">
    <property type="entry name" value="S15_bact"/>
    <property type="match status" value="1"/>
</dbReference>
<dbReference type="PANTHER" id="PTHR23321">
    <property type="entry name" value="RIBOSOMAL PROTEIN S15, BACTERIAL AND ORGANELLAR"/>
    <property type="match status" value="1"/>
</dbReference>
<dbReference type="PANTHER" id="PTHR23321:SF26">
    <property type="entry name" value="SMALL RIBOSOMAL SUBUNIT PROTEIN US15M"/>
    <property type="match status" value="1"/>
</dbReference>
<dbReference type="Pfam" id="PF00312">
    <property type="entry name" value="Ribosomal_S15"/>
    <property type="match status" value="1"/>
</dbReference>
<dbReference type="SMART" id="SM01387">
    <property type="entry name" value="Ribosomal_S15"/>
    <property type="match status" value="1"/>
</dbReference>
<dbReference type="SUPFAM" id="SSF47060">
    <property type="entry name" value="S15/NS1 RNA-binding domain"/>
    <property type="match status" value="1"/>
</dbReference>
<dbReference type="PROSITE" id="PS00362">
    <property type="entry name" value="RIBOSOMAL_S15"/>
    <property type="match status" value="1"/>
</dbReference>
<proteinExistence type="inferred from homology"/>
<protein>
    <recommendedName>
        <fullName evidence="1">Small ribosomal subunit protein uS15</fullName>
    </recommendedName>
    <alternativeName>
        <fullName evidence="2">30S ribosomal protein S15</fullName>
    </alternativeName>
</protein>
<sequence>MALDAAVKQSIIKEYATTEGDTGSPEVQVAVLTQRIKDLTEHMKEHKHDFHTQRGLLAMVGRRKRMLSYLKNTDIARYRALIERLGLRR</sequence>
<accession>A1R524</accession>
<comment type="function">
    <text evidence="1">One of the primary rRNA binding proteins, it binds directly to 16S rRNA where it helps nucleate assembly of the platform of the 30S subunit by binding and bridging several RNA helices of the 16S rRNA.</text>
</comment>
<comment type="function">
    <text evidence="1">Forms an intersubunit bridge (bridge B4) with the 23S rRNA of the 50S subunit in the ribosome.</text>
</comment>
<comment type="subunit">
    <text evidence="1">Part of the 30S ribosomal subunit. Forms a bridge to the 50S subunit in the 70S ribosome, contacting the 23S rRNA.</text>
</comment>
<comment type="similarity">
    <text evidence="1">Belongs to the universal ribosomal protein uS15 family.</text>
</comment>
<reference key="1">
    <citation type="journal article" date="2006" name="PLoS Genet.">
        <title>Secrets of soil survival revealed by the genome sequence of Arthrobacter aurescens TC1.</title>
        <authorList>
            <person name="Mongodin E.F."/>
            <person name="Shapir N."/>
            <person name="Daugherty S.C."/>
            <person name="DeBoy R.T."/>
            <person name="Emerson J.B."/>
            <person name="Shvartzbeyn A."/>
            <person name="Radune D."/>
            <person name="Vamathevan J."/>
            <person name="Riggs F."/>
            <person name="Grinberg V."/>
            <person name="Khouri H.M."/>
            <person name="Wackett L.P."/>
            <person name="Nelson K.E."/>
            <person name="Sadowsky M.J."/>
        </authorList>
    </citation>
    <scope>NUCLEOTIDE SEQUENCE [LARGE SCALE GENOMIC DNA]</scope>
    <source>
        <strain>TC1</strain>
    </source>
</reference>
<gene>
    <name evidence="1" type="primary">rpsO</name>
    <name type="ordered locus">AAur_1569</name>
</gene>
<organism>
    <name type="scientific">Paenarthrobacter aurescens (strain TC1)</name>
    <dbReference type="NCBI Taxonomy" id="290340"/>
    <lineage>
        <taxon>Bacteria</taxon>
        <taxon>Bacillati</taxon>
        <taxon>Actinomycetota</taxon>
        <taxon>Actinomycetes</taxon>
        <taxon>Micrococcales</taxon>
        <taxon>Micrococcaceae</taxon>
        <taxon>Paenarthrobacter</taxon>
    </lineage>
</organism>